<reference key="1">
    <citation type="submission" date="2001-07" db="EMBL/GenBank/DDBJ databases">
        <title>Galensin, a novel homodimeric antimicrobial peptide from the defensive skin secretion of Kassina senegalensis: isolation, structural characterisation and cloning of precursor cDNA.</title>
        <authorList>
            <person name="Reid C.N."/>
            <person name="Bjourson A.J."/>
            <person name="Shaw C."/>
        </authorList>
    </citation>
    <scope>NUCLEOTIDE SEQUENCE [MRNA]</scope>
    <source>
        <tissue>Skin</tissue>
    </source>
</reference>
<reference key="2">
    <citation type="submission" date="2000-03" db="UniProtKB">
        <authorList>
            <person name="Reid C.N."/>
            <person name="Bjourson T."/>
            <person name="Shaw C."/>
        </authorList>
    </citation>
    <scope>PROTEIN SEQUENCE OF 49-71</scope>
    <scope>FUNCTION</scope>
    <scope>TISSUE SPECIFICITY</scope>
    <scope>AMIDATION AT PHE-71</scope>
    <source>
        <tissue>Skin</tissue>
    </source>
</reference>
<name>GALE_KASSE</name>
<proteinExistence type="evidence at protein level"/>
<feature type="signal peptide" evidence="1">
    <location>
        <begin position="1"/>
        <end position="22"/>
    </location>
</feature>
<feature type="propeptide" id="PRO_0000003459" evidence="2">
    <location>
        <begin position="23"/>
        <end position="48"/>
    </location>
</feature>
<feature type="peptide" id="PRO_0000003460" description="Galensin">
    <location>
        <begin position="49"/>
        <end position="71"/>
    </location>
</feature>
<feature type="modified residue" description="Phenylalanine amide" evidence="2">
    <location>
        <position position="71"/>
    </location>
</feature>
<feature type="disulfide bond" description="Interchain">
    <location>
        <position position="49"/>
    </location>
</feature>
<organism>
    <name type="scientific">Kassina senegalensis</name>
    <name type="common">Senegal running frog</name>
    <dbReference type="NCBI Taxonomy" id="8415"/>
    <lineage>
        <taxon>Eukaryota</taxon>
        <taxon>Metazoa</taxon>
        <taxon>Chordata</taxon>
        <taxon>Craniata</taxon>
        <taxon>Vertebrata</taxon>
        <taxon>Euteleostomi</taxon>
        <taxon>Amphibia</taxon>
        <taxon>Batrachia</taxon>
        <taxon>Anura</taxon>
        <taxon>Neobatrachia</taxon>
        <taxon>Microhyloidea</taxon>
        <taxon>Hyperoliidae</taxon>
        <taxon>Kassina</taxon>
    </lineage>
</organism>
<dbReference type="EMBL" id="AJ318759">
    <property type="protein sequence ID" value="CAC47951.1"/>
    <property type="molecule type" value="mRNA"/>
</dbReference>
<dbReference type="GO" id="GO:0005576">
    <property type="term" value="C:extracellular region"/>
    <property type="evidence" value="ECO:0007669"/>
    <property type="project" value="UniProtKB-SubCell"/>
</dbReference>
<dbReference type="GO" id="GO:0042742">
    <property type="term" value="P:defense response to bacterium"/>
    <property type="evidence" value="ECO:0007669"/>
    <property type="project" value="UniProtKB-KW"/>
</dbReference>
<dbReference type="InterPro" id="IPR004275">
    <property type="entry name" value="Frog_antimicrobial_propeptide"/>
</dbReference>
<dbReference type="Pfam" id="PF03032">
    <property type="entry name" value="FSAP_sig_propep"/>
    <property type="match status" value="1"/>
</dbReference>
<sequence length="72" mass="8371">MLTLKKSMLLLFFLGLVSVSLADDKREDEAEEGEDKRAAEEERNVEKRCYSAAKYPGFQEFINRKYKSSRFG</sequence>
<accession>Q90W78</accession>
<accession>P82448</accession>
<protein>
    <recommendedName>
        <fullName>Galensin</fullName>
    </recommendedName>
</protein>
<evidence type="ECO:0000255" key="1"/>
<evidence type="ECO:0000269" key="2">
    <source ref="2"/>
</evidence>
<evidence type="ECO:0000305" key="3"/>
<comment type="function">
    <text evidence="2">Antibacterial activity against the Gram-positive bacterium M.luteus and the Gram-negative bacterium E.coli.</text>
</comment>
<comment type="subunit">
    <text>Homodimer; disulfide-linked.</text>
</comment>
<comment type="subcellular location">
    <subcellularLocation>
        <location>Secreted</location>
    </subcellularLocation>
</comment>
<comment type="tissue specificity">
    <text evidence="2">Expressed by the skin glands.</text>
</comment>
<comment type="similarity">
    <text evidence="3">Belongs to the frog skin active peptide (FSAP) family. Brevinin subfamily.</text>
</comment>
<keyword id="KW-0027">Amidation</keyword>
<keyword id="KW-0878">Amphibian defense peptide</keyword>
<keyword id="KW-0044">Antibiotic</keyword>
<keyword id="KW-0929">Antimicrobial</keyword>
<keyword id="KW-0165">Cleavage on pair of basic residues</keyword>
<keyword id="KW-0903">Direct protein sequencing</keyword>
<keyword id="KW-1015">Disulfide bond</keyword>
<keyword id="KW-0964">Secreted</keyword>
<keyword id="KW-0732">Signal</keyword>